<comment type="catalytic activity">
    <reaction evidence="1">
        <text>tRNA(Lys) + L-lysine + ATP = L-lysyl-tRNA(Lys) + AMP + diphosphate</text>
        <dbReference type="Rhea" id="RHEA:20792"/>
        <dbReference type="Rhea" id="RHEA-COMP:9696"/>
        <dbReference type="Rhea" id="RHEA-COMP:9697"/>
        <dbReference type="ChEBI" id="CHEBI:30616"/>
        <dbReference type="ChEBI" id="CHEBI:32551"/>
        <dbReference type="ChEBI" id="CHEBI:33019"/>
        <dbReference type="ChEBI" id="CHEBI:78442"/>
        <dbReference type="ChEBI" id="CHEBI:78529"/>
        <dbReference type="ChEBI" id="CHEBI:456215"/>
        <dbReference type="EC" id="6.1.1.6"/>
    </reaction>
</comment>
<comment type="cofactor">
    <cofactor evidence="1">
        <name>Mg(2+)</name>
        <dbReference type="ChEBI" id="CHEBI:18420"/>
    </cofactor>
    <text evidence="1">Binds 3 Mg(2+) ions per subunit.</text>
</comment>
<comment type="subunit">
    <text evidence="1">Homodimer.</text>
</comment>
<comment type="subcellular location">
    <subcellularLocation>
        <location evidence="1">Cytoplasm</location>
    </subcellularLocation>
</comment>
<comment type="similarity">
    <text evidence="1">Belongs to the class-II aminoacyl-tRNA synthetase family.</text>
</comment>
<comment type="sequence caution" evidence="2">
    <conflict type="erroneous initiation">
        <sequence resource="EMBL-CDS" id="BAC64530"/>
    </conflict>
</comment>
<reference key="1">
    <citation type="journal article" date="2003" name="Genome Res.">
        <title>Genome sequence of an M3 strain of Streptococcus pyogenes reveals a large-scale genomic rearrangement in invasive strains and new insights into phage evolution.</title>
        <authorList>
            <person name="Nakagawa I."/>
            <person name="Kurokawa K."/>
            <person name="Yamashita A."/>
            <person name="Nakata M."/>
            <person name="Tomiyasu Y."/>
            <person name="Okahashi N."/>
            <person name="Kawabata S."/>
            <person name="Yamazaki K."/>
            <person name="Shiba T."/>
            <person name="Yasunaga T."/>
            <person name="Hayashi H."/>
            <person name="Hattori M."/>
            <person name="Hamada S."/>
        </authorList>
    </citation>
    <scope>NUCLEOTIDE SEQUENCE [LARGE SCALE GENOMIC DNA]</scope>
    <source>
        <strain>SSI-1</strain>
    </source>
</reference>
<organism>
    <name type="scientific">Streptococcus pyogenes serotype M3 (strain SSI-1)</name>
    <dbReference type="NCBI Taxonomy" id="193567"/>
    <lineage>
        <taxon>Bacteria</taxon>
        <taxon>Bacillati</taxon>
        <taxon>Bacillota</taxon>
        <taxon>Bacilli</taxon>
        <taxon>Lactobacillales</taxon>
        <taxon>Streptococcaceae</taxon>
        <taxon>Streptococcus</taxon>
    </lineage>
</organism>
<sequence>MSNQHIEELNDQQIVRREKMMALAEQGIDPFGKRFGRTANSAELKENYADKTKEELHELNETAIVAGRLMTKRGKGKVGFAHLQDREGQIQLYVRKDSVGEDNYEIFKKADLGDFIGVEGEVMRTDMGELSIKATKLTHLSKSLRPLPEKFHGLTDIETIYRKRHLDLISNRESFDRFVTRSKMISEIRRYLDGLDFLEVETPVLHNEAGGAAARPFVTHHNAQNIDMVLRIATELHLKRLIVGGMERVYEIGRIFRNEGMDATHNPEFTSIEVYQAYADYLDIMNLTEGIIQHAAKAVKGDGPIDYQGTEIRINEPFKRVHMVDAIKEVTGVDFWPEMTVEEAIALAKEKQVPLEKHFTSVGHIINAFFEEFVEETLVQPTFVFGHPVEVSPLAKKNPEDTRFTDRFELFIMTKEYANAFTELNDPIDQLSRFEAQAQAKELGDDEATGIDYDFVEALEYGMPPTGGLGIGIDRLCMLLTNTTTIRDVLLFPTMKP</sequence>
<evidence type="ECO:0000255" key="1">
    <source>
        <dbReference type="HAMAP-Rule" id="MF_00252"/>
    </source>
</evidence>
<evidence type="ECO:0000305" key="2"/>
<gene>
    <name evidence="1" type="primary">lysS</name>
    <name type="ordered locus">SPs1435</name>
</gene>
<accession>P0DG47</accession>
<accession>Q878F7</accession>
<accession>Q8K880</accession>
<dbReference type="EC" id="6.1.1.6" evidence="1"/>
<dbReference type="EMBL" id="BA000034">
    <property type="protein sequence ID" value="BAC64530.1"/>
    <property type="status" value="ALT_INIT"/>
    <property type="molecule type" value="Genomic_DNA"/>
</dbReference>
<dbReference type="RefSeq" id="WP_011054296.1">
    <property type="nucleotide sequence ID" value="NC_004606.1"/>
</dbReference>
<dbReference type="SMR" id="P0DG47"/>
<dbReference type="KEGG" id="sps:SPs1435"/>
<dbReference type="HOGENOM" id="CLU_008255_6_0_9"/>
<dbReference type="GO" id="GO:0005829">
    <property type="term" value="C:cytosol"/>
    <property type="evidence" value="ECO:0007669"/>
    <property type="project" value="TreeGrafter"/>
</dbReference>
<dbReference type="GO" id="GO:0005524">
    <property type="term" value="F:ATP binding"/>
    <property type="evidence" value="ECO:0007669"/>
    <property type="project" value="UniProtKB-UniRule"/>
</dbReference>
<dbReference type="GO" id="GO:0140096">
    <property type="term" value="F:catalytic activity, acting on a protein"/>
    <property type="evidence" value="ECO:0007669"/>
    <property type="project" value="UniProtKB-ARBA"/>
</dbReference>
<dbReference type="GO" id="GO:0004824">
    <property type="term" value="F:lysine-tRNA ligase activity"/>
    <property type="evidence" value="ECO:0007669"/>
    <property type="project" value="UniProtKB-UniRule"/>
</dbReference>
<dbReference type="GO" id="GO:0000287">
    <property type="term" value="F:magnesium ion binding"/>
    <property type="evidence" value="ECO:0007669"/>
    <property type="project" value="UniProtKB-UniRule"/>
</dbReference>
<dbReference type="GO" id="GO:0016740">
    <property type="term" value="F:transferase activity"/>
    <property type="evidence" value="ECO:0007669"/>
    <property type="project" value="UniProtKB-ARBA"/>
</dbReference>
<dbReference type="GO" id="GO:0000049">
    <property type="term" value="F:tRNA binding"/>
    <property type="evidence" value="ECO:0007669"/>
    <property type="project" value="TreeGrafter"/>
</dbReference>
<dbReference type="GO" id="GO:0006430">
    <property type="term" value="P:lysyl-tRNA aminoacylation"/>
    <property type="evidence" value="ECO:0007669"/>
    <property type="project" value="UniProtKB-UniRule"/>
</dbReference>
<dbReference type="CDD" id="cd00775">
    <property type="entry name" value="LysRS_core"/>
    <property type="match status" value="1"/>
</dbReference>
<dbReference type="CDD" id="cd04322">
    <property type="entry name" value="LysRS_N"/>
    <property type="match status" value="1"/>
</dbReference>
<dbReference type="FunFam" id="2.40.50.140:FF:000024">
    <property type="entry name" value="Lysine--tRNA ligase"/>
    <property type="match status" value="1"/>
</dbReference>
<dbReference type="FunFam" id="3.30.930.10:FF:000001">
    <property type="entry name" value="Lysine--tRNA ligase"/>
    <property type="match status" value="1"/>
</dbReference>
<dbReference type="Gene3D" id="3.30.930.10">
    <property type="entry name" value="Bira Bifunctional Protein, Domain 2"/>
    <property type="match status" value="1"/>
</dbReference>
<dbReference type="Gene3D" id="2.40.50.140">
    <property type="entry name" value="Nucleic acid-binding proteins"/>
    <property type="match status" value="1"/>
</dbReference>
<dbReference type="HAMAP" id="MF_00252">
    <property type="entry name" value="Lys_tRNA_synth_class2"/>
    <property type="match status" value="1"/>
</dbReference>
<dbReference type="InterPro" id="IPR004364">
    <property type="entry name" value="Aa-tRNA-synt_II"/>
</dbReference>
<dbReference type="InterPro" id="IPR006195">
    <property type="entry name" value="aa-tRNA-synth_II"/>
</dbReference>
<dbReference type="InterPro" id="IPR045864">
    <property type="entry name" value="aa-tRNA-synth_II/BPL/LPL"/>
</dbReference>
<dbReference type="InterPro" id="IPR002313">
    <property type="entry name" value="Lys-tRNA-ligase_II"/>
</dbReference>
<dbReference type="InterPro" id="IPR044136">
    <property type="entry name" value="Lys-tRNA-ligase_II_N"/>
</dbReference>
<dbReference type="InterPro" id="IPR018149">
    <property type="entry name" value="Lys-tRNA-synth_II_C"/>
</dbReference>
<dbReference type="InterPro" id="IPR012340">
    <property type="entry name" value="NA-bd_OB-fold"/>
</dbReference>
<dbReference type="InterPro" id="IPR004365">
    <property type="entry name" value="NA-bd_OB_tRNA"/>
</dbReference>
<dbReference type="NCBIfam" id="TIGR00499">
    <property type="entry name" value="lysS_bact"/>
    <property type="match status" value="1"/>
</dbReference>
<dbReference type="NCBIfam" id="NF001756">
    <property type="entry name" value="PRK00484.1"/>
    <property type="match status" value="1"/>
</dbReference>
<dbReference type="PANTHER" id="PTHR42918:SF15">
    <property type="entry name" value="LYSINE--TRNA LIGASE, CHLOROPLASTIC_MITOCHONDRIAL"/>
    <property type="match status" value="1"/>
</dbReference>
<dbReference type="PANTHER" id="PTHR42918">
    <property type="entry name" value="LYSYL-TRNA SYNTHETASE"/>
    <property type="match status" value="1"/>
</dbReference>
<dbReference type="Pfam" id="PF00152">
    <property type="entry name" value="tRNA-synt_2"/>
    <property type="match status" value="1"/>
</dbReference>
<dbReference type="Pfam" id="PF01336">
    <property type="entry name" value="tRNA_anti-codon"/>
    <property type="match status" value="1"/>
</dbReference>
<dbReference type="PRINTS" id="PR00982">
    <property type="entry name" value="TRNASYNTHLYS"/>
</dbReference>
<dbReference type="SUPFAM" id="SSF55681">
    <property type="entry name" value="Class II aaRS and biotin synthetases"/>
    <property type="match status" value="1"/>
</dbReference>
<dbReference type="SUPFAM" id="SSF50249">
    <property type="entry name" value="Nucleic acid-binding proteins"/>
    <property type="match status" value="1"/>
</dbReference>
<dbReference type="PROSITE" id="PS50862">
    <property type="entry name" value="AA_TRNA_LIGASE_II"/>
    <property type="match status" value="1"/>
</dbReference>
<protein>
    <recommendedName>
        <fullName evidence="1">Lysine--tRNA ligase</fullName>
        <ecNumber evidence="1">6.1.1.6</ecNumber>
    </recommendedName>
    <alternativeName>
        <fullName evidence="1">Lysyl-tRNA synthetase</fullName>
        <shortName evidence="1">LysRS</shortName>
    </alternativeName>
</protein>
<feature type="chain" id="PRO_0000411613" description="Lysine--tRNA ligase">
    <location>
        <begin position="1"/>
        <end position="497"/>
    </location>
</feature>
<feature type="binding site" evidence="1">
    <location>
        <position position="409"/>
    </location>
    <ligand>
        <name>Mg(2+)</name>
        <dbReference type="ChEBI" id="CHEBI:18420"/>
        <label>1</label>
    </ligand>
</feature>
<feature type="binding site" evidence="1">
    <location>
        <position position="416"/>
    </location>
    <ligand>
        <name>Mg(2+)</name>
        <dbReference type="ChEBI" id="CHEBI:18420"/>
        <label>1</label>
    </ligand>
</feature>
<feature type="binding site" evidence="1">
    <location>
        <position position="416"/>
    </location>
    <ligand>
        <name>Mg(2+)</name>
        <dbReference type="ChEBI" id="CHEBI:18420"/>
        <label>2</label>
    </ligand>
</feature>
<keyword id="KW-0030">Aminoacyl-tRNA synthetase</keyword>
<keyword id="KW-0067">ATP-binding</keyword>
<keyword id="KW-0963">Cytoplasm</keyword>
<keyword id="KW-0436">Ligase</keyword>
<keyword id="KW-0460">Magnesium</keyword>
<keyword id="KW-0479">Metal-binding</keyword>
<keyword id="KW-0547">Nucleotide-binding</keyword>
<keyword id="KW-0648">Protein biosynthesis</keyword>
<proteinExistence type="inferred from homology"/>
<name>SYK_STRPQ</name>